<dbReference type="EC" id="2.7.1.197" evidence="1 2"/>
<dbReference type="EMBL" id="U00089">
    <property type="protein sequence ID" value="AAB95839.1"/>
    <property type="status" value="ALT_FRAME"/>
    <property type="molecule type" value="Genomic_DNA"/>
</dbReference>
<dbReference type="PIR" id="S73517">
    <property type="entry name" value="S73517"/>
</dbReference>
<dbReference type="RefSeq" id="NP_110340.1">
    <property type="nucleotide sequence ID" value="NC_000912.1"/>
</dbReference>
<dbReference type="STRING" id="272634.MPN_651"/>
<dbReference type="EnsemblBacteria" id="AAB95839">
    <property type="protein sequence ID" value="AAB95839"/>
    <property type="gene ID" value="MPN_651"/>
</dbReference>
<dbReference type="KEGG" id="mpn:MPN_651"/>
<dbReference type="PATRIC" id="fig|272634.6.peg.715"/>
<dbReference type="HOGENOM" id="CLU_028721_2_0_14"/>
<dbReference type="OrthoDB" id="9814222at2"/>
<dbReference type="Proteomes" id="UP000000808">
    <property type="component" value="Chromosome"/>
</dbReference>
<dbReference type="GO" id="GO:0005886">
    <property type="term" value="C:plasma membrane"/>
    <property type="evidence" value="ECO:0007669"/>
    <property type="project" value="UniProtKB-SubCell"/>
</dbReference>
<dbReference type="GO" id="GO:0016301">
    <property type="term" value="F:kinase activity"/>
    <property type="evidence" value="ECO:0007669"/>
    <property type="project" value="UniProtKB-KW"/>
</dbReference>
<dbReference type="GO" id="GO:0022872">
    <property type="term" value="F:protein-N(PI)-phosphohistidine-mannitol phosphotransferase system transmembrane transporter activity"/>
    <property type="evidence" value="ECO:0007669"/>
    <property type="project" value="InterPro"/>
</dbReference>
<dbReference type="GO" id="GO:0090563">
    <property type="term" value="F:protein-phosphocysteine-sugar phosphotransferase activity"/>
    <property type="evidence" value="ECO:0007669"/>
    <property type="project" value="TreeGrafter"/>
</dbReference>
<dbReference type="GO" id="GO:0009401">
    <property type="term" value="P:phosphoenolpyruvate-dependent sugar phosphotransferase system"/>
    <property type="evidence" value="ECO:0007669"/>
    <property type="project" value="UniProtKB-KW"/>
</dbReference>
<dbReference type="CDD" id="cd05567">
    <property type="entry name" value="PTS_IIB_mannitol"/>
    <property type="match status" value="1"/>
</dbReference>
<dbReference type="Gene3D" id="3.40.50.2300">
    <property type="match status" value="1"/>
</dbReference>
<dbReference type="InterPro" id="IPR036095">
    <property type="entry name" value="PTS_EIIB-like_sf"/>
</dbReference>
<dbReference type="InterPro" id="IPR013011">
    <property type="entry name" value="PTS_EIIB_2"/>
</dbReference>
<dbReference type="InterPro" id="IPR003501">
    <property type="entry name" value="PTS_EIIB_2/3"/>
</dbReference>
<dbReference type="InterPro" id="IPR029503">
    <property type="entry name" value="PTS_EIIB_mannitol"/>
</dbReference>
<dbReference type="InterPro" id="IPR003352">
    <property type="entry name" value="PTS_EIIC"/>
</dbReference>
<dbReference type="InterPro" id="IPR013014">
    <property type="entry name" value="PTS_EIIC_2"/>
</dbReference>
<dbReference type="InterPro" id="IPR050893">
    <property type="entry name" value="Sugar_PTS"/>
</dbReference>
<dbReference type="PANTHER" id="PTHR30181">
    <property type="entry name" value="MANNITOL PERMEASE IIC COMPONENT"/>
    <property type="match status" value="1"/>
</dbReference>
<dbReference type="PANTHER" id="PTHR30181:SF3">
    <property type="entry name" value="MULTIPHOSPHORYL TRANSFER PROTEIN"/>
    <property type="match status" value="1"/>
</dbReference>
<dbReference type="Pfam" id="PF02378">
    <property type="entry name" value="PTS_EIIC"/>
    <property type="match status" value="1"/>
</dbReference>
<dbReference type="Pfam" id="PF02302">
    <property type="entry name" value="PTS_IIB"/>
    <property type="match status" value="1"/>
</dbReference>
<dbReference type="SUPFAM" id="SSF52794">
    <property type="entry name" value="PTS system IIB component-like"/>
    <property type="match status" value="1"/>
</dbReference>
<dbReference type="PROSITE" id="PS51099">
    <property type="entry name" value="PTS_EIIB_TYPE_2"/>
    <property type="match status" value="1"/>
</dbReference>
<dbReference type="PROSITE" id="PS51104">
    <property type="entry name" value="PTS_EIIC_TYPE_2"/>
    <property type="match status" value="1"/>
</dbReference>
<sequence length="488" mass="53440">MRKKLAKVKVHIQSLDSLLSSMTMPIIGIFIAWGLLASFFIPSGWTPDKNLALMVGIGIQYVIPTIIXFFGGKKIYEIRGGVIAVIIAIAVIAAGQTEAFTKIVGQKSVMFLGVMIFGPIAALILKHTEKFWIHRIKSGFEMLVNNFYLGFLGFALIFPSFYLSIYLIGYIQLGLKLLVEIMQQYKLYPIAAIVIEPAKVLFLNNAINHGVLTPLGLQQVRDSGKSILFLLESNPGPGLGLLVAFLIFFFKRDKKLSSNAASSSPIHLFGGIHEVYFPFVLLKPVLILATIAVGVVGNGILQIFNAGTIAPVSPGSVIAGFLQINKTPLDVAGYALALVLSAVTSLLISLLLLSLTRKKQLKTLQEAQAQVAEMKQTPAKKPRQKDTPAIATKIDFSQVTFVCDAGMGSSTMGAAIFRKELKNQNIEDITVINKAIVDLKDEKVIITISQLYDRVKAKRADATIYTINQFLDKQGYLTIIEKIKNEKN</sequence>
<name>PTMCB_MYCPN</name>
<feature type="chain" id="PRO_0000186619" description="PTS system mannitol-specific EIICB component">
    <location>
        <begin position="1"/>
        <end position="488"/>
    </location>
</feature>
<feature type="topological domain" description="Cytoplasmic" evidence="1">
    <location>
        <begin position="1"/>
        <end position="26"/>
    </location>
</feature>
<feature type="transmembrane region" description="Helical" evidence="1">
    <location>
        <begin position="27"/>
        <end position="48"/>
    </location>
</feature>
<feature type="topological domain" description="Extracellular" evidence="1">
    <location>
        <begin position="49"/>
        <end position="52"/>
    </location>
</feature>
<feature type="transmembrane region" description="Helical" evidence="1">
    <location>
        <begin position="53"/>
        <end position="73"/>
    </location>
</feature>
<feature type="topological domain" description="Cytoplasmic" evidence="1">
    <location>
        <begin position="74"/>
        <end position="147"/>
    </location>
</feature>
<feature type="transmembrane region" description="Helical" evidence="1">
    <location>
        <begin position="148"/>
        <end position="169"/>
    </location>
</feature>
<feature type="topological domain" description="Extracellular" evidence="1">
    <location>
        <begin position="170"/>
        <end position="178"/>
    </location>
</feature>
<feature type="transmembrane region" description="Helical" evidence="1">
    <location>
        <begin position="179"/>
        <end position="199"/>
    </location>
</feature>
<feature type="topological domain" description="Cytoplasmic" evidence="1">
    <location>
        <begin position="200"/>
        <end position="289"/>
    </location>
</feature>
<feature type="transmembrane region" description="Helical" evidence="1">
    <location>
        <begin position="290"/>
        <end position="309"/>
    </location>
</feature>
<feature type="topological domain" description="Extracellular" evidence="1">
    <location>
        <begin position="310"/>
        <end position="331"/>
    </location>
</feature>
<feature type="transmembrane region" description="Helical" evidence="1">
    <location>
        <begin position="332"/>
        <end position="353"/>
    </location>
</feature>
<feature type="topological domain" description="Cytoplasmic" evidence="1">
    <location>
        <begin position="354"/>
        <end position="488"/>
    </location>
</feature>
<feature type="domain" description="PTS EIIC type-2" evidence="4">
    <location>
        <begin position="15"/>
        <end position="362"/>
    </location>
</feature>
<feature type="domain" description="PTS EIIB type-2" evidence="3">
    <location>
        <begin position="397"/>
        <end position="488"/>
    </location>
</feature>
<feature type="active site" description="Phosphocysteine intermediate; for EIIB activity" evidence="1 2">
    <location>
        <position position="403"/>
    </location>
</feature>
<feature type="modified residue" description="Phosphocysteine; by EIIA" evidence="1 2 3">
    <location>
        <position position="403"/>
    </location>
</feature>
<reference key="1">
    <citation type="journal article" date="1996" name="Nucleic Acids Res.">
        <title>Complete sequence analysis of the genome of the bacterium Mycoplasma pneumoniae.</title>
        <authorList>
            <person name="Himmelreich R."/>
            <person name="Hilbert H."/>
            <person name="Plagens H."/>
            <person name="Pirkl E."/>
            <person name="Li B.-C."/>
            <person name="Herrmann R."/>
        </authorList>
    </citation>
    <scope>NUCLEOTIDE SEQUENCE [LARGE SCALE GENOMIC DNA]</scope>
    <source>
        <strain>ATCC 29342 / M129 / Subtype 1</strain>
    </source>
</reference>
<accession>P75146</accession>
<gene>
    <name type="primary">mtlA</name>
    <name type="ordered locus">MPN_651</name>
    <name type="ORF">MP191</name>
</gene>
<proteinExistence type="inferred from homology"/>
<protein>
    <recommendedName>
        <fullName evidence="2">PTS system mannitol-specific EIICB component</fullName>
    </recommendedName>
    <alternativeName>
        <fullName evidence="2">EIICB-Mtl</fullName>
        <shortName evidence="2">EII-Mtl</shortName>
    </alternativeName>
    <domain>
        <recommendedName>
            <fullName evidence="2">Mannitol permease IIC component</fullName>
        </recommendedName>
        <alternativeName>
            <fullName evidence="2">PTS system mannitol-specific EIIC component</fullName>
        </alternativeName>
    </domain>
    <domain>
        <recommendedName>
            <fullName evidence="2">Mannitol-specific phosphotransferase enzyme IIB component</fullName>
            <ecNumber evidence="1 2">2.7.1.197</ecNumber>
        </recommendedName>
        <alternativeName>
            <fullName evidence="2">PTS system mannitol-specific EIIB component</fullName>
        </alternativeName>
    </domain>
</protein>
<evidence type="ECO:0000250" key="1">
    <source>
        <dbReference type="UniProtKB" id="P00550"/>
    </source>
</evidence>
<evidence type="ECO:0000250" key="2">
    <source>
        <dbReference type="UniProtKB" id="P28008"/>
    </source>
</evidence>
<evidence type="ECO:0000255" key="3">
    <source>
        <dbReference type="PROSITE-ProRule" id="PRU00422"/>
    </source>
</evidence>
<evidence type="ECO:0000255" key="4">
    <source>
        <dbReference type="PROSITE-ProRule" id="PRU00427"/>
    </source>
</evidence>
<evidence type="ECO:0000305" key="5"/>
<keyword id="KW-1003">Cell membrane</keyword>
<keyword id="KW-0418">Kinase</keyword>
<keyword id="KW-0472">Membrane</keyword>
<keyword id="KW-0597">Phosphoprotein</keyword>
<keyword id="KW-0598">Phosphotransferase system</keyword>
<keyword id="KW-1185">Reference proteome</keyword>
<keyword id="KW-0762">Sugar transport</keyword>
<keyword id="KW-0808">Transferase</keyword>
<keyword id="KW-0812">Transmembrane</keyword>
<keyword id="KW-1133">Transmembrane helix</keyword>
<keyword id="KW-0813">Transport</keyword>
<comment type="function">
    <text evidence="2">The phosphoenolpyruvate-dependent sugar phosphotransferase system (sugar PTS), a major carbohydrate active transport system, catalyzes the phosphorylation of incoming sugar substrates concomitantly with their translocation across the cell membrane. The enzyme II CmtAB PTS system is involved in D-mannitol transport.</text>
</comment>
<comment type="catalytic activity">
    <reaction evidence="1 2">
        <text>D-mannitol(out) + N(pros)-phospho-L-histidyl-[protein] = D-mannitol 1-phosphate(in) + L-histidyl-[protein]</text>
        <dbReference type="Rhea" id="RHEA:33363"/>
        <dbReference type="Rhea" id="RHEA-COMP:9745"/>
        <dbReference type="Rhea" id="RHEA-COMP:9746"/>
        <dbReference type="ChEBI" id="CHEBI:16899"/>
        <dbReference type="ChEBI" id="CHEBI:29979"/>
        <dbReference type="ChEBI" id="CHEBI:61381"/>
        <dbReference type="ChEBI" id="CHEBI:64837"/>
        <dbReference type="EC" id="2.7.1.197"/>
    </reaction>
</comment>
<comment type="subunit">
    <text evidence="2">Homodimer.</text>
</comment>
<comment type="subcellular location">
    <subcellularLocation>
        <location evidence="4">Cell membrane</location>
        <topology evidence="4">Multi-pass membrane protein</topology>
    </subcellularLocation>
</comment>
<comment type="domain">
    <text evidence="4">The EIIC type-2 domain forms the PTS system translocation channel and contains the specific substrate-binding site.</text>
</comment>
<comment type="domain">
    <text evidence="3">The PTS EIIB type-2 domain is phosphorylated by phospho-EIIA on a cysteinyl residue. Then, it transfers the phosphoryl group to the sugar substrate concomitantly with the sugar uptake processed by the PTS EIIC type-2 domain.</text>
</comment>
<comment type="sequence caution" evidence="5">
    <conflict type="frameshift">
        <sequence resource="EMBL-CDS" id="AAB95839"/>
    </conflict>
</comment>
<organism>
    <name type="scientific">Mycoplasma pneumoniae (strain ATCC 29342 / M129 / Subtype 1)</name>
    <name type="common">Mycoplasmoides pneumoniae</name>
    <dbReference type="NCBI Taxonomy" id="272634"/>
    <lineage>
        <taxon>Bacteria</taxon>
        <taxon>Bacillati</taxon>
        <taxon>Mycoplasmatota</taxon>
        <taxon>Mycoplasmoidales</taxon>
        <taxon>Mycoplasmoidaceae</taxon>
        <taxon>Mycoplasmoides</taxon>
    </lineage>
</organism>